<proteinExistence type="inferred from homology"/>
<evidence type="ECO:0000250" key="1"/>
<evidence type="ECO:0000255" key="2">
    <source>
        <dbReference type="HAMAP-Rule" id="MF_01109"/>
    </source>
</evidence>
<protein>
    <recommendedName>
        <fullName evidence="2">Ornithine carbamoyltransferase</fullName>
        <shortName evidence="2">OTCase</shortName>
        <ecNumber evidence="2">2.1.3.3</ecNumber>
    </recommendedName>
</protein>
<accession>C3LJQ5</accession>
<dbReference type="EC" id="2.1.3.3" evidence="2"/>
<dbReference type="EMBL" id="CP001215">
    <property type="protein sequence ID" value="ACP14763.1"/>
    <property type="molecule type" value="Genomic_DNA"/>
</dbReference>
<dbReference type="SMR" id="C3LJQ5"/>
<dbReference type="KEGG" id="bah:BAMEG_4390"/>
<dbReference type="HOGENOM" id="CLU_043846_3_2_9"/>
<dbReference type="UniPathway" id="UPA00254">
    <property type="reaction ID" value="UER00365"/>
</dbReference>
<dbReference type="GO" id="GO:0005737">
    <property type="term" value="C:cytoplasm"/>
    <property type="evidence" value="ECO:0007669"/>
    <property type="project" value="UniProtKB-SubCell"/>
</dbReference>
<dbReference type="GO" id="GO:0016597">
    <property type="term" value="F:amino acid binding"/>
    <property type="evidence" value="ECO:0007669"/>
    <property type="project" value="InterPro"/>
</dbReference>
<dbReference type="GO" id="GO:0004585">
    <property type="term" value="F:ornithine carbamoyltransferase activity"/>
    <property type="evidence" value="ECO:0007669"/>
    <property type="project" value="UniProtKB-UniRule"/>
</dbReference>
<dbReference type="GO" id="GO:0042450">
    <property type="term" value="P:arginine biosynthetic process via ornithine"/>
    <property type="evidence" value="ECO:0007669"/>
    <property type="project" value="TreeGrafter"/>
</dbReference>
<dbReference type="GO" id="GO:0019547">
    <property type="term" value="P:arginine catabolic process to ornithine"/>
    <property type="evidence" value="ECO:0007669"/>
    <property type="project" value="UniProtKB-UniRule"/>
</dbReference>
<dbReference type="GO" id="GO:0019240">
    <property type="term" value="P:citrulline biosynthetic process"/>
    <property type="evidence" value="ECO:0007669"/>
    <property type="project" value="TreeGrafter"/>
</dbReference>
<dbReference type="FunFam" id="3.40.50.1370:FF:000008">
    <property type="entry name" value="Ornithine carbamoyltransferase"/>
    <property type="match status" value="1"/>
</dbReference>
<dbReference type="FunFam" id="3.40.50.1370:FF:000016">
    <property type="entry name" value="Ornithine carbamoyltransferase"/>
    <property type="match status" value="1"/>
</dbReference>
<dbReference type="Gene3D" id="3.40.50.1370">
    <property type="entry name" value="Aspartate/ornithine carbamoyltransferase"/>
    <property type="match status" value="2"/>
</dbReference>
<dbReference type="HAMAP" id="MF_01109">
    <property type="entry name" value="OTCase"/>
    <property type="match status" value="1"/>
</dbReference>
<dbReference type="InterPro" id="IPR006132">
    <property type="entry name" value="Asp/Orn_carbamoyltranf_P-bd"/>
</dbReference>
<dbReference type="InterPro" id="IPR006130">
    <property type="entry name" value="Asp/Orn_carbamoylTrfase"/>
</dbReference>
<dbReference type="InterPro" id="IPR036901">
    <property type="entry name" value="Asp/Orn_carbamoylTrfase_sf"/>
</dbReference>
<dbReference type="InterPro" id="IPR006131">
    <property type="entry name" value="Asp_carbamoyltransf_Asp/Orn-bd"/>
</dbReference>
<dbReference type="InterPro" id="IPR002292">
    <property type="entry name" value="Orn/put_carbamltrans"/>
</dbReference>
<dbReference type="InterPro" id="IPR024904">
    <property type="entry name" value="OTCase_ArgI"/>
</dbReference>
<dbReference type="NCBIfam" id="TIGR00658">
    <property type="entry name" value="orni_carb_tr"/>
    <property type="match status" value="1"/>
</dbReference>
<dbReference type="NCBIfam" id="NF001986">
    <property type="entry name" value="PRK00779.1"/>
    <property type="match status" value="1"/>
</dbReference>
<dbReference type="PANTHER" id="PTHR45753">
    <property type="entry name" value="ORNITHINE CARBAMOYLTRANSFERASE, MITOCHONDRIAL"/>
    <property type="match status" value="1"/>
</dbReference>
<dbReference type="PANTHER" id="PTHR45753:SF3">
    <property type="entry name" value="ORNITHINE TRANSCARBAMYLASE, MITOCHONDRIAL"/>
    <property type="match status" value="1"/>
</dbReference>
<dbReference type="Pfam" id="PF00185">
    <property type="entry name" value="OTCace"/>
    <property type="match status" value="1"/>
</dbReference>
<dbReference type="Pfam" id="PF02729">
    <property type="entry name" value="OTCace_N"/>
    <property type="match status" value="1"/>
</dbReference>
<dbReference type="PRINTS" id="PR00100">
    <property type="entry name" value="AOTCASE"/>
</dbReference>
<dbReference type="PRINTS" id="PR00102">
    <property type="entry name" value="OTCASE"/>
</dbReference>
<dbReference type="SUPFAM" id="SSF53671">
    <property type="entry name" value="Aspartate/ornithine carbamoyltransferase"/>
    <property type="match status" value="1"/>
</dbReference>
<dbReference type="PROSITE" id="PS00097">
    <property type="entry name" value="CARBAMOYLTRANSFERASE"/>
    <property type="match status" value="1"/>
</dbReference>
<gene>
    <name evidence="2" type="primary">arcB</name>
    <name type="ordered locus">BAMEG_4390</name>
</gene>
<comment type="function">
    <text evidence="1">Reversibly catalyzes the transfer of the carbamoyl group from carbamoyl phosphate (CP) to the N(epsilon) atom of ornithine (ORN) to produce L-citrulline.</text>
</comment>
<comment type="catalytic activity">
    <reaction evidence="2">
        <text>carbamoyl phosphate + L-ornithine = L-citrulline + phosphate + H(+)</text>
        <dbReference type="Rhea" id="RHEA:19513"/>
        <dbReference type="ChEBI" id="CHEBI:15378"/>
        <dbReference type="ChEBI" id="CHEBI:43474"/>
        <dbReference type="ChEBI" id="CHEBI:46911"/>
        <dbReference type="ChEBI" id="CHEBI:57743"/>
        <dbReference type="ChEBI" id="CHEBI:58228"/>
        <dbReference type="EC" id="2.1.3.3"/>
    </reaction>
</comment>
<comment type="pathway">
    <text evidence="2">Amino-acid degradation; L-arginine degradation via ADI pathway; carbamoyl phosphate from L-arginine: step 2/2.</text>
</comment>
<comment type="subcellular location">
    <subcellularLocation>
        <location evidence="2">Cytoplasm</location>
    </subcellularLocation>
</comment>
<comment type="similarity">
    <text evidence="2">Belongs to the aspartate/ornithine carbamoyltransferase superfamily. OTCase family.</text>
</comment>
<sequence>MSTVQVPKLNTKDLLTLEELTQEEIISLIEFAIYLKKNKQEPLLQGKILGLIFDKHSTRTRVSFEAGMVQLGGHGMFLNGKEMQMGRGETVSDTAKVLSHYIDGIMIRTFSHADVEELAKESSIPVINGLTDDHHPCQALADLMTIYEETNTFKGIKLAYVGDGNNVCHSLLLASAKVGMHMTVATPVGYKPNEEIVKKALAIAKETGAEIEILHNPELAVNEADFIYTDVWMSMGQEGEEEKYTLFQPYQINKELVKHAKQTYHFLHCLPAHREEEVTGEIIDGPQSIVFEQAGNRLHAQKALLVSLFKNVEELS</sequence>
<organism>
    <name type="scientific">Bacillus anthracis (strain CDC 684 / NRRL 3495)</name>
    <dbReference type="NCBI Taxonomy" id="568206"/>
    <lineage>
        <taxon>Bacteria</taxon>
        <taxon>Bacillati</taxon>
        <taxon>Bacillota</taxon>
        <taxon>Bacilli</taxon>
        <taxon>Bacillales</taxon>
        <taxon>Bacillaceae</taxon>
        <taxon>Bacillus</taxon>
        <taxon>Bacillus cereus group</taxon>
    </lineage>
</organism>
<name>OTC_BACAC</name>
<reference key="1">
    <citation type="submission" date="2008-10" db="EMBL/GenBank/DDBJ databases">
        <title>Genome sequence of Bacillus anthracis str. CDC 684.</title>
        <authorList>
            <person name="Dodson R.J."/>
            <person name="Munk A.C."/>
            <person name="Brettin T."/>
            <person name="Bruce D."/>
            <person name="Detter C."/>
            <person name="Tapia R."/>
            <person name="Han C."/>
            <person name="Sutton G."/>
            <person name="Sims D."/>
        </authorList>
    </citation>
    <scope>NUCLEOTIDE SEQUENCE [LARGE SCALE GENOMIC DNA]</scope>
    <source>
        <strain>CDC 684 / NRRL 3495</strain>
    </source>
</reference>
<feature type="chain" id="PRO_1000213566" description="Ornithine carbamoyltransferase">
    <location>
        <begin position="1"/>
        <end position="316"/>
    </location>
</feature>
<feature type="binding site" evidence="2">
    <location>
        <begin position="57"/>
        <end position="60"/>
    </location>
    <ligand>
        <name>carbamoyl phosphate</name>
        <dbReference type="ChEBI" id="CHEBI:58228"/>
    </ligand>
</feature>
<feature type="binding site" evidence="2">
    <location>
        <position position="84"/>
    </location>
    <ligand>
        <name>carbamoyl phosphate</name>
        <dbReference type="ChEBI" id="CHEBI:58228"/>
    </ligand>
</feature>
<feature type="binding site" evidence="2">
    <location>
        <position position="108"/>
    </location>
    <ligand>
        <name>carbamoyl phosphate</name>
        <dbReference type="ChEBI" id="CHEBI:58228"/>
    </ligand>
</feature>
<feature type="binding site" evidence="2">
    <location>
        <begin position="135"/>
        <end position="138"/>
    </location>
    <ligand>
        <name>carbamoyl phosphate</name>
        <dbReference type="ChEBI" id="CHEBI:58228"/>
    </ligand>
</feature>
<feature type="binding site" evidence="2">
    <location>
        <position position="166"/>
    </location>
    <ligand>
        <name>L-ornithine</name>
        <dbReference type="ChEBI" id="CHEBI:46911"/>
    </ligand>
</feature>
<feature type="binding site" evidence="2">
    <location>
        <position position="230"/>
    </location>
    <ligand>
        <name>L-ornithine</name>
        <dbReference type="ChEBI" id="CHEBI:46911"/>
    </ligand>
</feature>
<feature type="binding site" evidence="2">
    <location>
        <begin position="234"/>
        <end position="235"/>
    </location>
    <ligand>
        <name>L-ornithine</name>
        <dbReference type="ChEBI" id="CHEBI:46911"/>
    </ligand>
</feature>
<feature type="binding site" evidence="2">
    <location>
        <begin position="269"/>
        <end position="270"/>
    </location>
    <ligand>
        <name>carbamoyl phosphate</name>
        <dbReference type="ChEBI" id="CHEBI:58228"/>
    </ligand>
</feature>
<feature type="binding site" evidence="2">
    <location>
        <position position="297"/>
    </location>
    <ligand>
        <name>carbamoyl phosphate</name>
        <dbReference type="ChEBI" id="CHEBI:58228"/>
    </ligand>
</feature>
<keyword id="KW-0056">Arginine metabolism</keyword>
<keyword id="KW-0963">Cytoplasm</keyword>
<keyword id="KW-0808">Transferase</keyword>